<reference key="1">
    <citation type="journal article" date="1998" name="Science">
        <title>Complete genome sequence of Treponema pallidum, the syphilis spirochete.</title>
        <authorList>
            <person name="Fraser C.M."/>
            <person name="Norris S.J."/>
            <person name="Weinstock G.M."/>
            <person name="White O."/>
            <person name="Sutton G.G."/>
            <person name="Dodson R.J."/>
            <person name="Gwinn M.L."/>
            <person name="Hickey E.K."/>
            <person name="Clayton R.A."/>
            <person name="Ketchum K.A."/>
            <person name="Sodergren E."/>
            <person name="Hardham J.M."/>
            <person name="McLeod M.P."/>
            <person name="Salzberg S.L."/>
            <person name="Peterson J.D."/>
            <person name="Khalak H.G."/>
            <person name="Richardson D.L."/>
            <person name="Howell J.K."/>
            <person name="Chidambaram M."/>
            <person name="Utterback T.R."/>
            <person name="McDonald L.A."/>
            <person name="Artiach P."/>
            <person name="Bowman C."/>
            <person name="Cotton M.D."/>
            <person name="Fujii C."/>
            <person name="Garland S.A."/>
            <person name="Hatch B."/>
            <person name="Horst K."/>
            <person name="Roberts K.M."/>
            <person name="Sandusky M."/>
            <person name="Weidman J.F."/>
            <person name="Smith H.O."/>
            <person name="Venter J.C."/>
        </authorList>
    </citation>
    <scope>NUCLEOTIDE SEQUENCE [LARGE SCALE GENOMIC DNA]</scope>
    <source>
        <strain>Nichols</strain>
    </source>
</reference>
<gene>
    <name type="ordered locus">TP_0035</name>
</gene>
<dbReference type="EMBL" id="AE000520">
    <property type="protein sequence ID" value="AAC65030.1"/>
    <property type="molecule type" value="Genomic_DNA"/>
</dbReference>
<dbReference type="PIR" id="E71375">
    <property type="entry name" value="E71375"/>
</dbReference>
<dbReference type="RefSeq" id="WP_010881484.1">
    <property type="nucleotide sequence ID" value="NC_021490.2"/>
</dbReference>
<dbReference type="SMR" id="O83078"/>
<dbReference type="IntAct" id="O83078">
    <property type="interactions" value="12"/>
</dbReference>
<dbReference type="STRING" id="243276.TP_0035"/>
<dbReference type="EnsemblBacteria" id="AAC65030">
    <property type="protein sequence ID" value="AAC65030"/>
    <property type="gene ID" value="TP_0035"/>
</dbReference>
<dbReference type="KEGG" id="tpa:TP_0035"/>
<dbReference type="KEGG" id="tpw:TPANIC_0035"/>
<dbReference type="eggNOG" id="COG1121">
    <property type="taxonomic scope" value="Bacteria"/>
</dbReference>
<dbReference type="HOGENOM" id="CLU_000604_1_11_12"/>
<dbReference type="OrthoDB" id="9806726at2"/>
<dbReference type="Proteomes" id="UP000000811">
    <property type="component" value="Chromosome"/>
</dbReference>
<dbReference type="GO" id="GO:0005886">
    <property type="term" value="C:plasma membrane"/>
    <property type="evidence" value="ECO:0007669"/>
    <property type="project" value="UniProtKB-SubCell"/>
</dbReference>
<dbReference type="GO" id="GO:0005524">
    <property type="term" value="F:ATP binding"/>
    <property type="evidence" value="ECO:0007669"/>
    <property type="project" value="UniProtKB-KW"/>
</dbReference>
<dbReference type="GO" id="GO:0016887">
    <property type="term" value="F:ATP hydrolysis activity"/>
    <property type="evidence" value="ECO:0007669"/>
    <property type="project" value="InterPro"/>
</dbReference>
<dbReference type="Gene3D" id="3.40.50.300">
    <property type="entry name" value="P-loop containing nucleotide triphosphate hydrolases"/>
    <property type="match status" value="1"/>
</dbReference>
<dbReference type="InterPro" id="IPR003593">
    <property type="entry name" value="AAA+_ATPase"/>
</dbReference>
<dbReference type="InterPro" id="IPR003439">
    <property type="entry name" value="ABC_transporter-like_ATP-bd"/>
</dbReference>
<dbReference type="InterPro" id="IPR050153">
    <property type="entry name" value="Metal_Ion_Import_ABC"/>
</dbReference>
<dbReference type="InterPro" id="IPR027417">
    <property type="entry name" value="P-loop_NTPase"/>
</dbReference>
<dbReference type="PANTHER" id="PTHR42734">
    <property type="entry name" value="METAL TRANSPORT SYSTEM ATP-BINDING PROTEIN TM_0124-RELATED"/>
    <property type="match status" value="1"/>
</dbReference>
<dbReference type="PANTHER" id="PTHR42734:SF17">
    <property type="entry name" value="METAL TRANSPORT SYSTEM ATP-BINDING PROTEIN TM_0124-RELATED"/>
    <property type="match status" value="1"/>
</dbReference>
<dbReference type="Pfam" id="PF00005">
    <property type="entry name" value="ABC_tran"/>
    <property type="match status" value="1"/>
</dbReference>
<dbReference type="SMART" id="SM00382">
    <property type="entry name" value="AAA"/>
    <property type="match status" value="1"/>
</dbReference>
<dbReference type="SUPFAM" id="SSF52540">
    <property type="entry name" value="P-loop containing nucleoside triphosphate hydrolases"/>
    <property type="match status" value="1"/>
</dbReference>
<dbReference type="PROSITE" id="PS50893">
    <property type="entry name" value="ABC_TRANSPORTER_2"/>
    <property type="match status" value="1"/>
</dbReference>
<sequence>MRIMASPFAVLLQNVSFRYTADARFILHEVDLAIPKGAYLSVVGENGSGKSTLVKLVLKLLKPSTGTIAHFVQRVGSVPQTKMHTLYFPLTVYEMLNSYRRLLRISHKWVVDAVLEEVGMRGAKKKLVYTLSGGELQKVYIARSLIGDPDLLVLDELSTGIDSRGQKDIYALLKGLNTSRNVTVISVEHNLDAAITNSTQIFHLSEGHGHLCNPQQYVSEFLDMQKKDALACAQCRSR</sequence>
<proteinExistence type="inferred from homology"/>
<name>Y035_TREPA</name>
<protein>
    <recommendedName>
        <fullName>Probable metal transport system ATP-binding protein TP_0035</fullName>
    </recommendedName>
</protein>
<accession>O83078</accession>
<keyword id="KW-0067">ATP-binding</keyword>
<keyword id="KW-0997">Cell inner membrane</keyword>
<keyword id="KW-1003">Cell membrane</keyword>
<keyword id="KW-0472">Membrane</keyword>
<keyword id="KW-0547">Nucleotide-binding</keyword>
<keyword id="KW-1185">Reference proteome</keyword>
<keyword id="KW-0813">Transport</keyword>
<evidence type="ECO:0000255" key="1">
    <source>
        <dbReference type="PROSITE-ProRule" id="PRU00434"/>
    </source>
</evidence>
<evidence type="ECO:0000305" key="2"/>
<organism>
    <name type="scientific">Treponema pallidum (strain Nichols)</name>
    <dbReference type="NCBI Taxonomy" id="243276"/>
    <lineage>
        <taxon>Bacteria</taxon>
        <taxon>Pseudomonadati</taxon>
        <taxon>Spirochaetota</taxon>
        <taxon>Spirochaetia</taxon>
        <taxon>Spirochaetales</taxon>
        <taxon>Treponemataceae</taxon>
        <taxon>Treponema</taxon>
    </lineage>
</organism>
<feature type="chain" id="PRO_0000093281" description="Probable metal transport system ATP-binding protein TP_0035">
    <location>
        <begin position="1"/>
        <end position="238"/>
    </location>
</feature>
<feature type="domain" description="ABC transporter" evidence="1">
    <location>
        <begin position="10"/>
        <end position="231"/>
    </location>
</feature>
<feature type="binding site" evidence="1">
    <location>
        <begin position="44"/>
        <end position="51"/>
    </location>
    <ligand>
        <name>ATP</name>
        <dbReference type="ChEBI" id="CHEBI:30616"/>
    </ligand>
</feature>
<comment type="function">
    <text>Part of an ATP-driven transport system TP_0034/TP_0035/TP_0036 for a metal. Probably responsible for energy coupling to the transport system.</text>
</comment>
<comment type="subcellular location">
    <subcellularLocation>
        <location evidence="2">Cell inner membrane</location>
        <topology evidence="2">Peripheral membrane protein</topology>
    </subcellularLocation>
</comment>
<comment type="similarity">
    <text evidence="2">Belongs to the ABC transporter superfamily.</text>
</comment>